<comment type="function">
    <text evidence="1">Catalyzes the NADPH-dependent rearrangement and reduction of 1-deoxy-D-xylulose-5-phosphate (DXP) to 2-C-methyl-D-erythritol 4-phosphate (MEP).</text>
</comment>
<comment type="catalytic activity">
    <reaction evidence="1">
        <text>2-C-methyl-D-erythritol 4-phosphate + NADP(+) = 1-deoxy-D-xylulose 5-phosphate + NADPH + H(+)</text>
        <dbReference type="Rhea" id="RHEA:13717"/>
        <dbReference type="ChEBI" id="CHEBI:15378"/>
        <dbReference type="ChEBI" id="CHEBI:57783"/>
        <dbReference type="ChEBI" id="CHEBI:57792"/>
        <dbReference type="ChEBI" id="CHEBI:58262"/>
        <dbReference type="ChEBI" id="CHEBI:58349"/>
        <dbReference type="EC" id="1.1.1.267"/>
    </reaction>
    <physiologicalReaction direction="right-to-left" evidence="1">
        <dbReference type="Rhea" id="RHEA:13719"/>
    </physiologicalReaction>
</comment>
<comment type="cofactor">
    <cofactor evidence="1">
        <name>Mg(2+)</name>
        <dbReference type="ChEBI" id="CHEBI:18420"/>
    </cofactor>
    <cofactor evidence="1">
        <name>Mn(2+)</name>
        <dbReference type="ChEBI" id="CHEBI:29035"/>
    </cofactor>
</comment>
<comment type="pathway">
    <text evidence="1">Isoprenoid biosynthesis; isopentenyl diphosphate biosynthesis via DXP pathway; isopentenyl diphosphate from 1-deoxy-D-xylulose 5-phosphate: step 1/6.</text>
</comment>
<comment type="similarity">
    <text evidence="1">Belongs to the DXR family.</text>
</comment>
<name>DXR_NEIMB</name>
<accession>Q9K1G8</accession>
<gene>
    <name evidence="1" type="primary">dxr</name>
    <name type="ordered locus">NMB0184</name>
</gene>
<protein>
    <recommendedName>
        <fullName evidence="1">1-deoxy-D-xylulose 5-phosphate reductoisomerase</fullName>
        <shortName evidence="1">DXP reductoisomerase</shortName>
        <ecNumber evidence="1">1.1.1.267</ecNumber>
    </recommendedName>
    <alternativeName>
        <fullName evidence="1">1-deoxyxylulose-5-phosphate reductoisomerase</fullName>
    </alternativeName>
    <alternativeName>
        <fullName evidence="1">2-C-methyl-D-erythritol 4-phosphate synthase</fullName>
    </alternativeName>
</protein>
<proteinExistence type="inferred from homology"/>
<sequence length="394" mass="41920">MTPQVLTILGSTGSIGESTLDVVSRHPEKFRVFALAGHKQVEKLAAQCQTFHPEYAVVADAEHAARLEALLKRDGTATQVLHGAQALVDVASADEVSGVMCAIVGAVGLPSALAAAQKGKTIYLANKETLVVSGALFMETARANGAAVLPVDSEHNAVFQVLPRDYAGRLNEHGIASIILTASGGPFLTADLNTFDRITPAQAVKHPNWRMGRKISVDSATMMNKGLELIEAHWLFNCPPDKLEVVIHPQSVIHSMVRYRDGSVLAQLGNPDMRTPIAYCLGLPERIDSGVGDLDFDALSALTFQKPDFDRFPCLRLAYEAMNAGGAAPCVLNAANEAAVAAFLDGQIKFTDIAKTVAHCLAQDFSDGIGDIGGLLAQDARTRAQARAFIGTLR</sequence>
<feature type="chain" id="PRO_0000163683" description="1-deoxy-D-xylulose 5-phosphate reductoisomerase">
    <location>
        <begin position="1"/>
        <end position="394"/>
    </location>
</feature>
<feature type="binding site" evidence="1">
    <location>
        <position position="12"/>
    </location>
    <ligand>
        <name>NADPH</name>
        <dbReference type="ChEBI" id="CHEBI:57783"/>
    </ligand>
</feature>
<feature type="binding site" evidence="1">
    <location>
        <position position="13"/>
    </location>
    <ligand>
        <name>NADPH</name>
        <dbReference type="ChEBI" id="CHEBI:57783"/>
    </ligand>
</feature>
<feature type="binding site" evidence="1">
    <location>
        <position position="14"/>
    </location>
    <ligand>
        <name>NADPH</name>
        <dbReference type="ChEBI" id="CHEBI:57783"/>
    </ligand>
</feature>
<feature type="binding site" evidence="1">
    <location>
        <position position="15"/>
    </location>
    <ligand>
        <name>NADPH</name>
        <dbReference type="ChEBI" id="CHEBI:57783"/>
    </ligand>
</feature>
<feature type="binding site" evidence="1">
    <location>
        <position position="39"/>
    </location>
    <ligand>
        <name>NADPH</name>
        <dbReference type="ChEBI" id="CHEBI:57783"/>
    </ligand>
</feature>
<feature type="binding site" evidence="1">
    <location>
        <position position="40"/>
    </location>
    <ligand>
        <name>NADPH</name>
        <dbReference type="ChEBI" id="CHEBI:57783"/>
    </ligand>
</feature>
<feature type="binding site" evidence="1">
    <location>
        <position position="126"/>
    </location>
    <ligand>
        <name>NADPH</name>
        <dbReference type="ChEBI" id="CHEBI:57783"/>
    </ligand>
</feature>
<feature type="binding site" evidence="1">
    <location>
        <position position="127"/>
    </location>
    <ligand>
        <name>1-deoxy-D-xylulose 5-phosphate</name>
        <dbReference type="ChEBI" id="CHEBI:57792"/>
    </ligand>
</feature>
<feature type="binding site" evidence="1">
    <location>
        <position position="128"/>
    </location>
    <ligand>
        <name>NADPH</name>
        <dbReference type="ChEBI" id="CHEBI:57783"/>
    </ligand>
</feature>
<feature type="binding site" evidence="1">
    <location>
        <position position="152"/>
    </location>
    <ligand>
        <name>Mn(2+)</name>
        <dbReference type="ChEBI" id="CHEBI:29035"/>
    </ligand>
</feature>
<feature type="binding site" evidence="1">
    <location>
        <position position="153"/>
    </location>
    <ligand>
        <name>1-deoxy-D-xylulose 5-phosphate</name>
        <dbReference type="ChEBI" id="CHEBI:57792"/>
    </ligand>
</feature>
<feature type="binding site" evidence="1">
    <location>
        <position position="154"/>
    </location>
    <ligand>
        <name>1-deoxy-D-xylulose 5-phosphate</name>
        <dbReference type="ChEBI" id="CHEBI:57792"/>
    </ligand>
</feature>
<feature type="binding site" evidence="1">
    <location>
        <position position="154"/>
    </location>
    <ligand>
        <name>Mn(2+)</name>
        <dbReference type="ChEBI" id="CHEBI:29035"/>
    </ligand>
</feature>
<feature type="binding site" evidence="1">
    <location>
        <position position="183"/>
    </location>
    <ligand>
        <name>1-deoxy-D-xylulose 5-phosphate</name>
        <dbReference type="ChEBI" id="CHEBI:57792"/>
    </ligand>
</feature>
<feature type="binding site" evidence="1">
    <location>
        <position position="206"/>
    </location>
    <ligand>
        <name>1-deoxy-D-xylulose 5-phosphate</name>
        <dbReference type="ChEBI" id="CHEBI:57792"/>
    </ligand>
</feature>
<feature type="binding site" evidence="1">
    <location>
        <position position="212"/>
    </location>
    <ligand>
        <name>NADPH</name>
        <dbReference type="ChEBI" id="CHEBI:57783"/>
    </ligand>
</feature>
<feature type="binding site" evidence="1">
    <location>
        <position position="219"/>
    </location>
    <ligand>
        <name>1-deoxy-D-xylulose 5-phosphate</name>
        <dbReference type="ChEBI" id="CHEBI:57792"/>
    </ligand>
</feature>
<feature type="binding site" evidence="1">
    <location>
        <position position="224"/>
    </location>
    <ligand>
        <name>1-deoxy-D-xylulose 5-phosphate</name>
        <dbReference type="ChEBI" id="CHEBI:57792"/>
    </ligand>
</feature>
<feature type="binding site" evidence="1">
    <location>
        <position position="225"/>
    </location>
    <ligand>
        <name>1-deoxy-D-xylulose 5-phosphate</name>
        <dbReference type="ChEBI" id="CHEBI:57792"/>
    </ligand>
</feature>
<feature type="binding site" evidence="1">
    <location>
        <position position="228"/>
    </location>
    <ligand>
        <name>1-deoxy-D-xylulose 5-phosphate</name>
        <dbReference type="ChEBI" id="CHEBI:57792"/>
    </ligand>
</feature>
<feature type="binding site" evidence="1">
    <location>
        <position position="228"/>
    </location>
    <ligand>
        <name>Mn(2+)</name>
        <dbReference type="ChEBI" id="CHEBI:29035"/>
    </ligand>
</feature>
<evidence type="ECO:0000255" key="1">
    <source>
        <dbReference type="HAMAP-Rule" id="MF_00183"/>
    </source>
</evidence>
<dbReference type="EC" id="1.1.1.267" evidence="1"/>
<dbReference type="EMBL" id="AE002098">
    <property type="protein sequence ID" value="AAF40641.1"/>
    <property type="molecule type" value="Genomic_DNA"/>
</dbReference>
<dbReference type="PIR" id="A81229">
    <property type="entry name" value="A81229"/>
</dbReference>
<dbReference type="RefSeq" id="NP_273242.1">
    <property type="nucleotide sequence ID" value="NC_003112.2"/>
</dbReference>
<dbReference type="SMR" id="Q9K1G8"/>
<dbReference type="FunCoup" id="Q9K1G8">
    <property type="interactions" value="333"/>
</dbReference>
<dbReference type="STRING" id="122586.NMB0184"/>
<dbReference type="PaxDb" id="122586-NMB0184"/>
<dbReference type="KEGG" id="nme:NMB0184"/>
<dbReference type="PATRIC" id="fig|122586.8.peg.226"/>
<dbReference type="HOGENOM" id="CLU_035714_4_0_4"/>
<dbReference type="InParanoid" id="Q9K1G8"/>
<dbReference type="OrthoDB" id="9806546at2"/>
<dbReference type="UniPathway" id="UPA00056">
    <property type="reaction ID" value="UER00092"/>
</dbReference>
<dbReference type="Proteomes" id="UP000000425">
    <property type="component" value="Chromosome"/>
</dbReference>
<dbReference type="GO" id="GO:0030604">
    <property type="term" value="F:1-deoxy-D-xylulose-5-phosphate reductoisomerase activity"/>
    <property type="evidence" value="ECO:0000318"/>
    <property type="project" value="GO_Central"/>
</dbReference>
<dbReference type="GO" id="GO:0030145">
    <property type="term" value="F:manganese ion binding"/>
    <property type="evidence" value="ECO:0000318"/>
    <property type="project" value="GO_Central"/>
</dbReference>
<dbReference type="GO" id="GO:0070402">
    <property type="term" value="F:NADPH binding"/>
    <property type="evidence" value="ECO:0000318"/>
    <property type="project" value="GO_Central"/>
</dbReference>
<dbReference type="GO" id="GO:0051484">
    <property type="term" value="P:isopentenyl diphosphate biosynthetic process, methylerythritol 4-phosphate pathway involved in terpenoid biosynthetic process"/>
    <property type="evidence" value="ECO:0000318"/>
    <property type="project" value="GO_Central"/>
</dbReference>
<dbReference type="FunFam" id="1.10.1740.10:FF:000004">
    <property type="entry name" value="1-deoxy-D-xylulose 5-phosphate reductoisomerase"/>
    <property type="match status" value="1"/>
</dbReference>
<dbReference type="FunFam" id="3.40.50.720:FF:000045">
    <property type="entry name" value="1-deoxy-D-xylulose 5-phosphate reductoisomerase"/>
    <property type="match status" value="1"/>
</dbReference>
<dbReference type="Gene3D" id="1.10.1740.10">
    <property type="match status" value="1"/>
</dbReference>
<dbReference type="Gene3D" id="3.40.50.720">
    <property type="entry name" value="NAD(P)-binding Rossmann-like Domain"/>
    <property type="match status" value="1"/>
</dbReference>
<dbReference type="HAMAP" id="MF_00183">
    <property type="entry name" value="DXP_reductoisom"/>
    <property type="match status" value="1"/>
</dbReference>
<dbReference type="InterPro" id="IPR003821">
    <property type="entry name" value="DXP_reductoisomerase"/>
</dbReference>
<dbReference type="InterPro" id="IPR013644">
    <property type="entry name" value="DXP_reductoisomerase_C"/>
</dbReference>
<dbReference type="InterPro" id="IPR013512">
    <property type="entry name" value="DXP_reductoisomerase_N"/>
</dbReference>
<dbReference type="InterPro" id="IPR026877">
    <property type="entry name" value="DXPR_C"/>
</dbReference>
<dbReference type="InterPro" id="IPR036169">
    <property type="entry name" value="DXPR_C_sf"/>
</dbReference>
<dbReference type="InterPro" id="IPR036291">
    <property type="entry name" value="NAD(P)-bd_dom_sf"/>
</dbReference>
<dbReference type="NCBIfam" id="TIGR00243">
    <property type="entry name" value="Dxr"/>
    <property type="match status" value="1"/>
</dbReference>
<dbReference type="NCBIfam" id="NF003938">
    <property type="entry name" value="PRK05447.1-1"/>
    <property type="match status" value="1"/>
</dbReference>
<dbReference type="NCBIfam" id="NF009114">
    <property type="entry name" value="PRK12464.1"/>
    <property type="match status" value="1"/>
</dbReference>
<dbReference type="PANTHER" id="PTHR30525">
    <property type="entry name" value="1-DEOXY-D-XYLULOSE 5-PHOSPHATE REDUCTOISOMERASE"/>
    <property type="match status" value="1"/>
</dbReference>
<dbReference type="PANTHER" id="PTHR30525:SF0">
    <property type="entry name" value="1-DEOXY-D-XYLULOSE 5-PHOSPHATE REDUCTOISOMERASE, CHLOROPLASTIC"/>
    <property type="match status" value="1"/>
</dbReference>
<dbReference type="Pfam" id="PF08436">
    <property type="entry name" value="DXP_redisom_C"/>
    <property type="match status" value="1"/>
</dbReference>
<dbReference type="Pfam" id="PF02670">
    <property type="entry name" value="DXP_reductoisom"/>
    <property type="match status" value="1"/>
</dbReference>
<dbReference type="Pfam" id="PF13288">
    <property type="entry name" value="DXPR_C"/>
    <property type="match status" value="1"/>
</dbReference>
<dbReference type="PIRSF" id="PIRSF006205">
    <property type="entry name" value="Dxp_reductismrs"/>
    <property type="match status" value="1"/>
</dbReference>
<dbReference type="SUPFAM" id="SSF69055">
    <property type="entry name" value="1-deoxy-D-xylulose-5-phosphate reductoisomerase, C-terminal domain"/>
    <property type="match status" value="1"/>
</dbReference>
<dbReference type="SUPFAM" id="SSF55347">
    <property type="entry name" value="Glyceraldehyde-3-phosphate dehydrogenase-like, C-terminal domain"/>
    <property type="match status" value="1"/>
</dbReference>
<dbReference type="SUPFAM" id="SSF51735">
    <property type="entry name" value="NAD(P)-binding Rossmann-fold domains"/>
    <property type="match status" value="1"/>
</dbReference>
<organism>
    <name type="scientific">Neisseria meningitidis serogroup B (strain ATCC BAA-335 / MC58)</name>
    <dbReference type="NCBI Taxonomy" id="122586"/>
    <lineage>
        <taxon>Bacteria</taxon>
        <taxon>Pseudomonadati</taxon>
        <taxon>Pseudomonadota</taxon>
        <taxon>Betaproteobacteria</taxon>
        <taxon>Neisseriales</taxon>
        <taxon>Neisseriaceae</taxon>
        <taxon>Neisseria</taxon>
    </lineage>
</organism>
<keyword id="KW-0414">Isoprene biosynthesis</keyword>
<keyword id="KW-0464">Manganese</keyword>
<keyword id="KW-0479">Metal-binding</keyword>
<keyword id="KW-0521">NADP</keyword>
<keyword id="KW-0560">Oxidoreductase</keyword>
<keyword id="KW-1185">Reference proteome</keyword>
<reference key="1">
    <citation type="journal article" date="2000" name="Science">
        <title>Complete genome sequence of Neisseria meningitidis serogroup B strain MC58.</title>
        <authorList>
            <person name="Tettelin H."/>
            <person name="Saunders N.J."/>
            <person name="Heidelberg J.F."/>
            <person name="Jeffries A.C."/>
            <person name="Nelson K.E."/>
            <person name="Eisen J.A."/>
            <person name="Ketchum K.A."/>
            <person name="Hood D.W."/>
            <person name="Peden J.F."/>
            <person name="Dodson R.J."/>
            <person name="Nelson W.C."/>
            <person name="Gwinn M.L."/>
            <person name="DeBoy R.T."/>
            <person name="Peterson J.D."/>
            <person name="Hickey E.K."/>
            <person name="Haft D.H."/>
            <person name="Salzberg S.L."/>
            <person name="White O."/>
            <person name="Fleischmann R.D."/>
            <person name="Dougherty B.A."/>
            <person name="Mason T.M."/>
            <person name="Ciecko A."/>
            <person name="Parksey D.S."/>
            <person name="Blair E."/>
            <person name="Cittone H."/>
            <person name="Clark E.B."/>
            <person name="Cotton M.D."/>
            <person name="Utterback T.R."/>
            <person name="Khouri H.M."/>
            <person name="Qin H."/>
            <person name="Vamathevan J.J."/>
            <person name="Gill J."/>
            <person name="Scarlato V."/>
            <person name="Masignani V."/>
            <person name="Pizza M."/>
            <person name="Grandi G."/>
            <person name="Sun L."/>
            <person name="Smith H.O."/>
            <person name="Fraser C.M."/>
            <person name="Moxon E.R."/>
            <person name="Rappuoli R."/>
            <person name="Venter J.C."/>
        </authorList>
    </citation>
    <scope>NUCLEOTIDE SEQUENCE [LARGE SCALE GENOMIC DNA]</scope>
    <source>
        <strain>ATCC BAA-335 / MC58</strain>
    </source>
</reference>